<feature type="chain" id="PRO_0000218659" description="Kynureninase">
    <location>
        <begin position="1"/>
        <end position="464"/>
    </location>
</feature>
<feature type="binding site" evidence="1">
    <location>
        <position position="137"/>
    </location>
    <ligand>
        <name>pyridoxal 5'-phosphate</name>
        <dbReference type="ChEBI" id="CHEBI:597326"/>
    </ligand>
</feature>
<feature type="binding site" evidence="1">
    <location>
        <position position="138"/>
    </location>
    <ligand>
        <name>pyridoxal 5'-phosphate</name>
        <dbReference type="ChEBI" id="CHEBI:597326"/>
    </ligand>
</feature>
<feature type="binding site" evidence="1">
    <location>
        <begin position="165"/>
        <end position="168"/>
    </location>
    <ligand>
        <name>pyridoxal 5'-phosphate</name>
        <dbReference type="ChEBI" id="CHEBI:597326"/>
    </ligand>
</feature>
<feature type="binding site" evidence="1">
    <location>
        <position position="221"/>
    </location>
    <ligand>
        <name>pyridoxal 5'-phosphate</name>
        <dbReference type="ChEBI" id="CHEBI:597326"/>
    </ligand>
</feature>
<feature type="binding site" evidence="1">
    <location>
        <position position="250"/>
    </location>
    <ligand>
        <name>pyridoxal 5'-phosphate</name>
        <dbReference type="ChEBI" id="CHEBI:597326"/>
    </ligand>
</feature>
<feature type="binding site" evidence="1">
    <location>
        <position position="253"/>
    </location>
    <ligand>
        <name>pyridoxal 5'-phosphate</name>
        <dbReference type="ChEBI" id="CHEBI:597326"/>
    </ligand>
</feature>
<feature type="binding site" evidence="1">
    <location>
        <position position="275"/>
    </location>
    <ligand>
        <name>pyridoxal 5'-phosphate</name>
        <dbReference type="ChEBI" id="CHEBI:597326"/>
    </ligand>
</feature>
<feature type="binding site" evidence="1">
    <location>
        <position position="305"/>
    </location>
    <ligand>
        <name>pyridoxal 5'-phosphate</name>
        <dbReference type="ChEBI" id="CHEBI:597326"/>
    </ligand>
</feature>
<feature type="binding site" evidence="1">
    <location>
        <position position="333"/>
    </location>
    <ligand>
        <name>pyridoxal 5'-phosphate</name>
        <dbReference type="ChEBI" id="CHEBI:597326"/>
    </ligand>
</feature>
<feature type="modified residue" description="N-acetylmethionine" evidence="1 2">
    <location>
        <position position="1"/>
    </location>
</feature>
<feature type="modified residue" description="N6-(pyridoxal phosphate)lysine" evidence="1">
    <location>
        <position position="276"/>
    </location>
</feature>
<feature type="sequence conflict" description="In Ref. 2; AAC53206." evidence="4" ref="2">
    <original>T</original>
    <variation>A</variation>
    <location>
        <position position="18"/>
    </location>
</feature>
<feature type="sequence conflict" description="In Ref. 1; AA sequence." evidence="4" ref="1">
    <original>D</original>
    <variation>N</variation>
    <location>
        <position position="26"/>
    </location>
</feature>
<feature type="sequence conflict" description="In Ref. 2; AAC53206." evidence="4" ref="2">
    <original>S</original>
    <variation>T</variation>
    <location>
        <position position="118"/>
    </location>
</feature>
<keyword id="KW-0007">Acetylation</keyword>
<keyword id="KW-0963">Cytoplasm</keyword>
<keyword id="KW-0903">Direct protein sequencing</keyword>
<keyword id="KW-0378">Hydrolase</keyword>
<keyword id="KW-0662">Pyridine nucleotide biosynthesis</keyword>
<keyword id="KW-0663">Pyridoxal phosphate</keyword>
<keyword id="KW-1185">Reference proteome</keyword>
<name>KYNU_RAT</name>
<protein>
    <recommendedName>
        <fullName evidence="1">Kynureninase</fullName>
        <ecNumber evidence="1">3.7.1.3</ecNumber>
    </recommendedName>
    <alternativeName>
        <fullName evidence="1">L-kynurenine hydrolase</fullName>
    </alternativeName>
</protein>
<reference key="1">
    <citation type="journal article" date="1995" name="Biochim. Biophys. Acta">
        <title>Amino-acid sequence of rat liver kynureninase.</title>
        <authorList>
            <person name="Takeuchi F."/>
            <person name="Tsubouchi R."/>
            <person name="Yoshino M."/>
            <person name="Shibata Y."/>
        </authorList>
    </citation>
    <scope>PROTEIN SEQUENCE</scope>
    <scope>IDENTIFICATION BY MASS SPECTROMETRY</scope>
    <scope>ACETYLATION AT MET-1</scope>
    <source>
        <strain>Wistar</strain>
        <tissue>Liver</tissue>
    </source>
</reference>
<reference key="2">
    <citation type="journal article" date="1997" name="FEBS Lett.">
        <title>Cloning and recombinant expression of rat and human kynureninase.</title>
        <authorList>
            <person name="Toma S."/>
            <person name="Nakamura M."/>
            <person name="Tone S."/>
            <person name="Okuno E."/>
            <person name="Kido R."/>
            <person name="Breton J."/>
            <person name="Avanzi N."/>
            <person name="Cozzi L."/>
            <person name="Speciale C."/>
            <person name="Mostardini M."/>
            <person name="Gatti S."/>
            <person name="Benatti L."/>
        </authorList>
    </citation>
    <scope>NUCLEOTIDE SEQUENCE [MRNA]</scope>
    <scope>PARTIAL PROTEIN SEQUENCE</scope>
    <scope>FUNCTION</scope>
    <scope>CATALYTIC ACTIVITY</scope>
    <scope>ACTIVITY REGULATION</scope>
    <scope>BIOPHYSICOCHEMICAL PROPERTIES</scope>
    <scope>TISSUE SPECIFICITY</scope>
    <source>
        <tissue>Liver</tissue>
    </source>
</reference>
<reference key="3">
    <citation type="journal article" date="2004" name="Genome Res.">
        <title>The status, quality, and expansion of the NIH full-length cDNA project: the Mammalian Gene Collection (MGC).</title>
        <authorList>
            <consortium name="The MGC Project Team"/>
        </authorList>
    </citation>
    <scope>NUCLEOTIDE SEQUENCE [LARGE SCALE MRNA]</scope>
    <source>
        <tissue>Kidney</tissue>
    </source>
</reference>
<reference key="4">
    <citation type="journal article" date="1996" name="Eur. J. Biochem.">
        <title>Isolation and expression of a cDNA clone encoding human kynureninase.</title>
        <authorList>
            <person name="Alberati-Giani D."/>
            <person name="Buchli R."/>
            <person name="Malherbe P."/>
            <person name="Broger C."/>
            <person name="Lang G."/>
            <person name="Koehler C."/>
            <person name="Lahm H.-W."/>
            <person name="Cesura A.M."/>
        </authorList>
    </citation>
    <scope>NUCLEOTIDE SEQUENCE [MRNA] OF 19-117</scope>
    <scope>PARTIAL PROTEIN SEQUENCE</scope>
    <source>
        <tissue>Kidney</tissue>
        <tissue>Liver</tissue>
    </source>
</reference>
<reference key="5">
    <citation type="submission" date="1992-06" db="PIR data bank">
        <authorList>
            <person name="Matsui Lee I.S."/>
            <person name="Okuno E."/>
            <person name="Kido R."/>
        </authorList>
    </citation>
    <scope>PROTEIN SEQUENCE OF 83-116 AND 273-319</scope>
    <source>
        <tissue>Liver</tissue>
    </source>
</reference>
<reference key="6">
    <citation type="journal article" date="2012" name="Nat. Commun.">
        <title>Quantitative maps of protein phosphorylation sites across 14 different rat organs and tissues.</title>
        <authorList>
            <person name="Lundby A."/>
            <person name="Secher A."/>
            <person name="Lage K."/>
            <person name="Nordsborg N.B."/>
            <person name="Dmytriyev A."/>
            <person name="Lundby C."/>
            <person name="Olsen J.V."/>
        </authorList>
    </citation>
    <scope>IDENTIFICATION BY MASS SPECTROMETRY [LARGE SCALE ANALYSIS]</scope>
</reference>
<accession>P70712</accession>
<accession>Q68G25</accession>
<accession>Q7M0D0</accession>
<accession>Q9QW90</accession>
<sequence>MEPSPLELPVDAVRRIATELNCDPTDERVALRLDEEDKLKRFKDCFYIPKMRDLPSIDLSLVNEDDNAIYFLGNSLGLQPKMVKTYLEEELDKWAKIGAYGHEVGKRPWIIGDESIVSLMKDIVGAHEKEIALMNALTVNLHLLLLSFFKPTPKRHKILLEAKAFPSDHYAIESQIQLHGLDVEKSMRMIKPREGEETLRMEDILEVIEKEGDSIAVVLFSGLHFYTGQLFNIPAITQAGHAKGCFVGFDLAHAVGNVELHLHDWDVDFACWCSYKYLNSGAGGLAGAFIHEKHAHTIKPALVGWFGHELSTRFNMDNKLQLIPGVNGFRISNPPILLVCSLHASLEIFQQATMTALRRKSILLTGYLEYLLKHYHGGNDTENKRPVVNIITPSRAEERGCQLTLTFSISKKGVFKELEKRGVVCDKREPEGIRVAPVPLYNSFHDVYKFIRLLTAILDSTERN</sequence>
<comment type="function">
    <text evidence="1 3">Catalyzes the cleavage of L-kynurenine (L-Kyn) and L-3-hydroxykynurenine (L-3OHKyn) into anthranilic acid (AA) and 3-hydroxyanthranilic acid (3-OHAA), respectively. Has a preference for the L-3-hydroxy form. Also has cysteine-conjugate-beta-lyase activity.</text>
</comment>
<comment type="catalytic activity">
    <reaction evidence="1 3">
        <text>L-kynurenine + H2O = anthranilate + L-alanine + H(+)</text>
        <dbReference type="Rhea" id="RHEA:16813"/>
        <dbReference type="ChEBI" id="CHEBI:15377"/>
        <dbReference type="ChEBI" id="CHEBI:15378"/>
        <dbReference type="ChEBI" id="CHEBI:16567"/>
        <dbReference type="ChEBI" id="CHEBI:57959"/>
        <dbReference type="ChEBI" id="CHEBI:57972"/>
        <dbReference type="EC" id="3.7.1.3"/>
    </reaction>
</comment>
<comment type="catalytic activity">
    <reaction evidence="1 3">
        <text>3-hydroxy-L-kynurenine + H2O = 3-hydroxyanthranilate + L-alanine + H(+)</text>
        <dbReference type="Rhea" id="RHEA:25143"/>
        <dbReference type="ChEBI" id="CHEBI:15377"/>
        <dbReference type="ChEBI" id="CHEBI:15378"/>
        <dbReference type="ChEBI" id="CHEBI:36559"/>
        <dbReference type="ChEBI" id="CHEBI:57972"/>
        <dbReference type="ChEBI" id="CHEBI:58125"/>
        <dbReference type="EC" id="3.7.1.3"/>
    </reaction>
</comment>
<comment type="cofactor">
    <cofactor>
        <name>pyridoxal 5'-phosphate</name>
        <dbReference type="ChEBI" id="CHEBI:597326"/>
    </cofactor>
</comment>
<comment type="activity regulation">
    <text evidence="3">Inhibited by o-methylbenzoylalanine (OMBA).</text>
</comment>
<comment type="biophysicochemical properties">
    <kinetics>
        <KM evidence="3">440 uM for L-kynurenine</KM>
        <KM evidence="3">32 uM for DL-3-hydroxykynurenine</KM>
    </kinetics>
    <phDependence>
        <text evidence="3">Optimum pH is about 9.0 with L-kynurenine as substrate, and about 8.5 with DL-3-hydroxykynurenine as substrate.</text>
    </phDependence>
</comment>
<comment type="pathway">
    <text evidence="1">Amino-acid degradation; L-kynurenine degradation; L-alanine and anthranilate from L-kynurenine: step 1/1.</text>
</comment>
<comment type="pathway">
    <text evidence="1">Cofactor biosynthesis; NAD(+) biosynthesis; quinolinate from L-kynurenine: step 2/3.</text>
</comment>
<comment type="subunit">
    <text evidence="1">Homodimer.</text>
</comment>
<comment type="subcellular location">
    <subcellularLocation>
        <location evidence="1">Cytoplasm</location>
        <location evidence="1">Cytosol</location>
    </subcellularLocation>
</comment>
<comment type="tissue specificity">
    <text evidence="3">High levels in liver and kidney. Also detected in heart, retina, ovary. Lung, testis and brain.</text>
</comment>
<comment type="induction">
    <text>Inhibited by thiol reagents and heavy metal ions.</text>
</comment>
<comment type="similarity">
    <text evidence="1">Belongs to the kynureninase family.</text>
</comment>
<gene>
    <name type="primary">Kynu</name>
</gene>
<evidence type="ECO:0000255" key="1">
    <source>
        <dbReference type="HAMAP-Rule" id="MF_03017"/>
    </source>
</evidence>
<evidence type="ECO:0000269" key="2">
    <source>
    </source>
</evidence>
<evidence type="ECO:0000269" key="3">
    <source>
    </source>
</evidence>
<evidence type="ECO:0000305" key="4"/>
<organism>
    <name type="scientific">Rattus norvegicus</name>
    <name type="common">Rat</name>
    <dbReference type="NCBI Taxonomy" id="10116"/>
    <lineage>
        <taxon>Eukaryota</taxon>
        <taxon>Metazoa</taxon>
        <taxon>Chordata</taxon>
        <taxon>Craniata</taxon>
        <taxon>Vertebrata</taxon>
        <taxon>Euteleostomi</taxon>
        <taxon>Mammalia</taxon>
        <taxon>Eutheria</taxon>
        <taxon>Euarchontoglires</taxon>
        <taxon>Glires</taxon>
        <taxon>Rodentia</taxon>
        <taxon>Myomorpha</taxon>
        <taxon>Muroidea</taxon>
        <taxon>Muridae</taxon>
        <taxon>Murinae</taxon>
        <taxon>Rattus</taxon>
    </lineage>
</organism>
<dbReference type="EC" id="3.7.1.3" evidence="1"/>
<dbReference type="EMBL" id="U68168">
    <property type="protein sequence ID" value="AAC53206.1"/>
    <property type="molecule type" value="mRNA"/>
</dbReference>
<dbReference type="EMBL" id="BC078762">
    <property type="protein sequence ID" value="AAH78762.1"/>
    <property type="molecule type" value="mRNA"/>
</dbReference>
<dbReference type="PIR" id="PS0370">
    <property type="entry name" value="PS0370"/>
</dbReference>
<dbReference type="PIR" id="S59898">
    <property type="entry name" value="S59898"/>
</dbReference>
<dbReference type="PIR" id="T48675">
    <property type="entry name" value="T48675"/>
</dbReference>
<dbReference type="RefSeq" id="NP_446354.2">
    <property type="nucleotide sequence ID" value="NM_053902.3"/>
</dbReference>
<dbReference type="SMR" id="P70712"/>
<dbReference type="FunCoup" id="P70712">
    <property type="interactions" value="188"/>
</dbReference>
<dbReference type="STRING" id="10116.ENSRNOP00000050947"/>
<dbReference type="BindingDB" id="P70712"/>
<dbReference type="ChEMBL" id="CHEMBL2969"/>
<dbReference type="iPTMnet" id="P70712"/>
<dbReference type="PhosphoSitePlus" id="P70712"/>
<dbReference type="PaxDb" id="10116-ENSRNOP00000050947"/>
<dbReference type="GeneID" id="116682"/>
<dbReference type="KEGG" id="rno:116682"/>
<dbReference type="UCSC" id="RGD:71061">
    <property type="organism name" value="rat"/>
</dbReference>
<dbReference type="AGR" id="RGD:71061"/>
<dbReference type="CTD" id="8942"/>
<dbReference type="RGD" id="71061">
    <property type="gene designation" value="Kynu"/>
</dbReference>
<dbReference type="VEuPathDB" id="HostDB:ENSRNOG00000029993"/>
<dbReference type="eggNOG" id="KOG3846">
    <property type="taxonomic scope" value="Eukaryota"/>
</dbReference>
<dbReference type="HOGENOM" id="CLU_003433_4_0_1"/>
<dbReference type="InParanoid" id="P70712"/>
<dbReference type="PhylomeDB" id="P70712"/>
<dbReference type="BioCyc" id="MetaCyc:MONOMER-15007"/>
<dbReference type="Reactome" id="R-RNO-71240">
    <property type="pathway name" value="Tryptophan catabolism"/>
</dbReference>
<dbReference type="SABIO-RK" id="P70712"/>
<dbReference type="UniPathway" id="UPA00253">
    <property type="reaction ID" value="UER00329"/>
</dbReference>
<dbReference type="UniPathway" id="UPA00334">
    <property type="reaction ID" value="UER00455"/>
</dbReference>
<dbReference type="PRO" id="PR:P70712"/>
<dbReference type="Proteomes" id="UP000002494">
    <property type="component" value="Chromosome 3"/>
</dbReference>
<dbReference type="Bgee" id="ENSRNOG00000029993">
    <property type="expression patterns" value="Expressed in liver and 12 other cell types or tissues"/>
</dbReference>
<dbReference type="GO" id="GO:0005737">
    <property type="term" value="C:cytoplasm"/>
    <property type="evidence" value="ECO:0000318"/>
    <property type="project" value="GO_Central"/>
</dbReference>
<dbReference type="GO" id="GO:0005829">
    <property type="term" value="C:cytosol"/>
    <property type="evidence" value="ECO:0000266"/>
    <property type="project" value="RGD"/>
</dbReference>
<dbReference type="GO" id="GO:0005739">
    <property type="term" value="C:mitochondrion"/>
    <property type="evidence" value="ECO:0000266"/>
    <property type="project" value="RGD"/>
</dbReference>
<dbReference type="GO" id="GO:0030429">
    <property type="term" value="F:kynureninase activity"/>
    <property type="evidence" value="ECO:0000314"/>
    <property type="project" value="RGD"/>
</dbReference>
<dbReference type="GO" id="GO:0042803">
    <property type="term" value="F:protein homodimerization activity"/>
    <property type="evidence" value="ECO:0000266"/>
    <property type="project" value="RGD"/>
</dbReference>
<dbReference type="GO" id="GO:0030170">
    <property type="term" value="F:pyridoxal phosphate binding"/>
    <property type="evidence" value="ECO:0000314"/>
    <property type="project" value="RGD"/>
</dbReference>
<dbReference type="GO" id="GO:0034354">
    <property type="term" value="P:'de novo' NAD biosynthetic process from L-tryptophan"/>
    <property type="evidence" value="ECO:0007669"/>
    <property type="project" value="UniProtKB-UniRule"/>
</dbReference>
<dbReference type="GO" id="GO:0043420">
    <property type="term" value="P:anthranilate metabolic process"/>
    <property type="evidence" value="ECO:0000266"/>
    <property type="project" value="RGD"/>
</dbReference>
<dbReference type="GO" id="GO:0097053">
    <property type="term" value="P:L-kynurenine catabolic process"/>
    <property type="evidence" value="ECO:0007669"/>
    <property type="project" value="UniProtKB-UniRule"/>
</dbReference>
<dbReference type="GO" id="GO:0006569">
    <property type="term" value="P:L-tryptophan catabolic process"/>
    <property type="evidence" value="ECO:0000266"/>
    <property type="project" value="RGD"/>
</dbReference>
<dbReference type="GO" id="GO:0019442">
    <property type="term" value="P:L-tryptophan catabolic process to acetyl-CoA"/>
    <property type="evidence" value="ECO:0000314"/>
    <property type="project" value="RGD"/>
</dbReference>
<dbReference type="GO" id="GO:0019441">
    <property type="term" value="P:L-tryptophan catabolic process to kynurenine"/>
    <property type="evidence" value="ECO:0000318"/>
    <property type="project" value="GO_Central"/>
</dbReference>
<dbReference type="GO" id="GO:0009435">
    <property type="term" value="P:NAD biosynthetic process"/>
    <property type="evidence" value="ECO:0000250"/>
    <property type="project" value="UniProtKB"/>
</dbReference>
<dbReference type="GO" id="GO:0019805">
    <property type="term" value="P:quinolinate biosynthetic process"/>
    <property type="evidence" value="ECO:0000266"/>
    <property type="project" value="RGD"/>
</dbReference>
<dbReference type="GO" id="GO:0034341">
    <property type="term" value="P:response to type II interferon"/>
    <property type="evidence" value="ECO:0000266"/>
    <property type="project" value="RGD"/>
</dbReference>
<dbReference type="GO" id="GO:0034516">
    <property type="term" value="P:response to vitamin B6"/>
    <property type="evidence" value="ECO:0000266"/>
    <property type="project" value="RGD"/>
</dbReference>
<dbReference type="FunFam" id="3.40.640.10:FF:000031">
    <property type="entry name" value="Kynureninase"/>
    <property type="match status" value="1"/>
</dbReference>
<dbReference type="FunFam" id="3.90.1150.10:FF:000203">
    <property type="entry name" value="Kynureninase"/>
    <property type="match status" value="1"/>
</dbReference>
<dbReference type="Gene3D" id="3.90.1150.10">
    <property type="entry name" value="Aspartate Aminotransferase, domain 1"/>
    <property type="match status" value="1"/>
</dbReference>
<dbReference type="Gene3D" id="3.40.640.10">
    <property type="entry name" value="Type I PLP-dependent aspartate aminotransferase-like (Major domain)"/>
    <property type="match status" value="1"/>
</dbReference>
<dbReference type="HAMAP" id="MF_01970">
    <property type="entry name" value="Kynureninase"/>
    <property type="match status" value="1"/>
</dbReference>
<dbReference type="InterPro" id="IPR010111">
    <property type="entry name" value="Kynureninase"/>
</dbReference>
<dbReference type="InterPro" id="IPR015424">
    <property type="entry name" value="PyrdxlP-dep_Trfase"/>
</dbReference>
<dbReference type="InterPro" id="IPR015421">
    <property type="entry name" value="PyrdxlP-dep_Trfase_major"/>
</dbReference>
<dbReference type="InterPro" id="IPR015422">
    <property type="entry name" value="PyrdxlP-dep_Trfase_small"/>
</dbReference>
<dbReference type="NCBIfam" id="TIGR01814">
    <property type="entry name" value="kynureninase"/>
    <property type="match status" value="1"/>
</dbReference>
<dbReference type="PANTHER" id="PTHR14084">
    <property type="entry name" value="KYNURENINASE"/>
    <property type="match status" value="1"/>
</dbReference>
<dbReference type="PANTHER" id="PTHR14084:SF0">
    <property type="entry name" value="KYNURENINASE"/>
    <property type="match status" value="1"/>
</dbReference>
<dbReference type="Pfam" id="PF22580">
    <property type="entry name" value="KYNU_C"/>
    <property type="match status" value="1"/>
</dbReference>
<dbReference type="PIRSF" id="PIRSF038800">
    <property type="entry name" value="KYNU"/>
    <property type="match status" value="1"/>
</dbReference>
<dbReference type="SUPFAM" id="SSF53383">
    <property type="entry name" value="PLP-dependent transferases"/>
    <property type="match status" value="1"/>
</dbReference>
<proteinExistence type="evidence at protein level"/>